<protein>
    <recommendedName>
        <fullName evidence="1">Threonine--tRNA ligase</fullName>
        <ecNumber evidence="1">6.1.1.3</ecNumber>
    </recommendedName>
    <alternativeName>
        <fullName evidence="1">Threonyl-tRNA synthetase</fullName>
        <shortName evidence="1">ThrRS</shortName>
    </alternativeName>
</protein>
<evidence type="ECO:0000255" key="1">
    <source>
        <dbReference type="HAMAP-Rule" id="MF_00184"/>
    </source>
</evidence>
<evidence type="ECO:0000255" key="2">
    <source>
        <dbReference type="PROSITE-ProRule" id="PRU01228"/>
    </source>
</evidence>
<organism>
    <name type="scientific">Yersinia pseudotuberculosis serotype I (strain IP32953)</name>
    <dbReference type="NCBI Taxonomy" id="273123"/>
    <lineage>
        <taxon>Bacteria</taxon>
        <taxon>Pseudomonadati</taxon>
        <taxon>Pseudomonadota</taxon>
        <taxon>Gammaproteobacteria</taxon>
        <taxon>Enterobacterales</taxon>
        <taxon>Yersiniaceae</taxon>
        <taxon>Yersinia</taxon>
    </lineage>
</organism>
<dbReference type="EC" id="6.1.1.3" evidence="1"/>
<dbReference type="EMBL" id="BX936398">
    <property type="protein sequence ID" value="CAH21580.1"/>
    <property type="molecule type" value="Genomic_DNA"/>
</dbReference>
<dbReference type="RefSeq" id="WP_002211836.1">
    <property type="nucleotide sequence ID" value="NZ_CP009712.1"/>
</dbReference>
<dbReference type="SMR" id="Q669Z0"/>
<dbReference type="GeneID" id="57976245"/>
<dbReference type="KEGG" id="ypo:BZ17_113"/>
<dbReference type="KEGG" id="yps:YPTB2342"/>
<dbReference type="PATRIC" id="fig|273123.14.peg.122"/>
<dbReference type="Proteomes" id="UP000001011">
    <property type="component" value="Chromosome"/>
</dbReference>
<dbReference type="GO" id="GO:0005829">
    <property type="term" value="C:cytosol"/>
    <property type="evidence" value="ECO:0007669"/>
    <property type="project" value="TreeGrafter"/>
</dbReference>
<dbReference type="GO" id="GO:0005524">
    <property type="term" value="F:ATP binding"/>
    <property type="evidence" value="ECO:0007669"/>
    <property type="project" value="UniProtKB-UniRule"/>
</dbReference>
<dbReference type="GO" id="GO:0046872">
    <property type="term" value="F:metal ion binding"/>
    <property type="evidence" value="ECO:0007669"/>
    <property type="project" value="UniProtKB-KW"/>
</dbReference>
<dbReference type="GO" id="GO:0004829">
    <property type="term" value="F:threonine-tRNA ligase activity"/>
    <property type="evidence" value="ECO:0007669"/>
    <property type="project" value="UniProtKB-UniRule"/>
</dbReference>
<dbReference type="GO" id="GO:0000049">
    <property type="term" value="F:tRNA binding"/>
    <property type="evidence" value="ECO:0007669"/>
    <property type="project" value="UniProtKB-KW"/>
</dbReference>
<dbReference type="GO" id="GO:0006435">
    <property type="term" value="P:threonyl-tRNA aminoacylation"/>
    <property type="evidence" value="ECO:0007669"/>
    <property type="project" value="UniProtKB-UniRule"/>
</dbReference>
<dbReference type="CDD" id="cd01667">
    <property type="entry name" value="TGS_ThrRS"/>
    <property type="match status" value="1"/>
</dbReference>
<dbReference type="CDD" id="cd00860">
    <property type="entry name" value="ThrRS_anticodon"/>
    <property type="match status" value="1"/>
</dbReference>
<dbReference type="CDD" id="cd00771">
    <property type="entry name" value="ThrRS_core"/>
    <property type="match status" value="1"/>
</dbReference>
<dbReference type="FunFam" id="3.10.20.30:FF:000005">
    <property type="entry name" value="Threonine--tRNA ligase"/>
    <property type="match status" value="1"/>
</dbReference>
<dbReference type="FunFam" id="3.30.54.20:FF:000002">
    <property type="entry name" value="Threonine--tRNA ligase"/>
    <property type="match status" value="1"/>
</dbReference>
<dbReference type="FunFam" id="3.30.930.10:FF:000002">
    <property type="entry name" value="Threonine--tRNA ligase"/>
    <property type="match status" value="1"/>
</dbReference>
<dbReference type="FunFam" id="3.40.50.800:FF:000001">
    <property type="entry name" value="Threonine--tRNA ligase"/>
    <property type="match status" value="1"/>
</dbReference>
<dbReference type="FunFam" id="3.30.980.10:FF:000005">
    <property type="entry name" value="Threonyl-tRNA synthetase, mitochondrial"/>
    <property type="match status" value="1"/>
</dbReference>
<dbReference type="Gene3D" id="3.10.20.30">
    <property type="match status" value="1"/>
</dbReference>
<dbReference type="Gene3D" id="3.30.54.20">
    <property type="match status" value="1"/>
</dbReference>
<dbReference type="Gene3D" id="3.40.50.800">
    <property type="entry name" value="Anticodon-binding domain"/>
    <property type="match status" value="1"/>
</dbReference>
<dbReference type="Gene3D" id="3.30.930.10">
    <property type="entry name" value="Bira Bifunctional Protein, Domain 2"/>
    <property type="match status" value="1"/>
</dbReference>
<dbReference type="Gene3D" id="3.30.980.10">
    <property type="entry name" value="Threonyl-trna Synthetase, Chain A, domain 2"/>
    <property type="match status" value="1"/>
</dbReference>
<dbReference type="HAMAP" id="MF_00184">
    <property type="entry name" value="Thr_tRNA_synth"/>
    <property type="match status" value="1"/>
</dbReference>
<dbReference type="InterPro" id="IPR002314">
    <property type="entry name" value="aa-tRNA-synt_IIb"/>
</dbReference>
<dbReference type="InterPro" id="IPR006195">
    <property type="entry name" value="aa-tRNA-synth_II"/>
</dbReference>
<dbReference type="InterPro" id="IPR045864">
    <property type="entry name" value="aa-tRNA-synth_II/BPL/LPL"/>
</dbReference>
<dbReference type="InterPro" id="IPR004154">
    <property type="entry name" value="Anticodon-bd"/>
</dbReference>
<dbReference type="InterPro" id="IPR036621">
    <property type="entry name" value="Anticodon-bd_dom_sf"/>
</dbReference>
<dbReference type="InterPro" id="IPR012675">
    <property type="entry name" value="Beta-grasp_dom_sf"/>
</dbReference>
<dbReference type="InterPro" id="IPR004095">
    <property type="entry name" value="TGS"/>
</dbReference>
<dbReference type="InterPro" id="IPR012676">
    <property type="entry name" value="TGS-like"/>
</dbReference>
<dbReference type="InterPro" id="IPR002320">
    <property type="entry name" value="Thr-tRNA-ligase_IIa"/>
</dbReference>
<dbReference type="InterPro" id="IPR018163">
    <property type="entry name" value="Thr/Ala-tRNA-synth_IIc_edit"/>
</dbReference>
<dbReference type="InterPro" id="IPR047246">
    <property type="entry name" value="ThrRS_anticodon"/>
</dbReference>
<dbReference type="InterPro" id="IPR033728">
    <property type="entry name" value="ThrRS_core"/>
</dbReference>
<dbReference type="InterPro" id="IPR012947">
    <property type="entry name" value="tRNA_SAD"/>
</dbReference>
<dbReference type="NCBIfam" id="TIGR00418">
    <property type="entry name" value="thrS"/>
    <property type="match status" value="1"/>
</dbReference>
<dbReference type="PANTHER" id="PTHR11451:SF44">
    <property type="entry name" value="THREONINE--TRNA LIGASE, CHLOROPLASTIC_MITOCHONDRIAL 2"/>
    <property type="match status" value="1"/>
</dbReference>
<dbReference type="PANTHER" id="PTHR11451">
    <property type="entry name" value="THREONINE-TRNA LIGASE"/>
    <property type="match status" value="1"/>
</dbReference>
<dbReference type="Pfam" id="PF03129">
    <property type="entry name" value="HGTP_anticodon"/>
    <property type="match status" value="1"/>
</dbReference>
<dbReference type="Pfam" id="PF02824">
    <property type="entry name" value="TGS"/>
    <property type="match status" value="1"/>
</dbReference>
<dbReference type="Pfam" id="PF00587">
    <property type="entry name" value="tRNA-synt_2b"/>
    <property type="match status" value="1"/>
</dbReference>
<dbReference type="Pfam" id="PF07973">
    <property type="entry name" value="tRNA_SAD"/>
    <property type="match status" value="1"/>
</dbReference>
<dbReference type="PRINTS" id="PR01047">
    <property type="entry name" value="TRNASYNTHTHR"/>
</dbReference>
<dbReference type="SMART" id="SM00863">
    <property type="entry name" value="tRNA_SAD"/>
    <property type="match status" value="1"/>
</dbReference>
<dbReference type="SUPFAM" id="SSF52954">
    <property type="entry name" value="Class II aaRS ABD-related"/>
    <property type="match status" value="1"/>
</dbReference>
<dbReference type="SUPFAM" id="SSF55681">
    <property type="entry name" value="Class II aaRS and biotin synthetases"/>
    <property type="match status" value="1"/>
</dbReference>
<dbReference type="SUPFAM" id="SSF81271">
    <property type="entry name" value="TGS-like"/>
    <property type="match status" value="1"/>
</dbReference>
<dbReference type="SUPFAM" id="SSF55186">
    <property type="entry name" value="ThrRS/AlaRS common domain"/>
    <property type="match status" value="1"/>
</dbReference>
<dbReference type="PROSITE" id="PS50862">
    <property type="entry name" value="AA_TRNA_LIGASE_II"/>
    <property type="match status" value="1"/>
</dbReference>
<dbReference type="PROSITE" id="PS51880">
    <property type="entry name" value="TGS"/>
    <property type="match status" value="1"/>
</dbReference>
<sequence>MPVITLPDGSQRHYDHAVSVLDVALDIGPGLAKACIAGRVNGELVDASDLIESDAQLAIITAKDAEGLEILRHSCAHLLGHAIKQLWPDTKMAIGPVIDNGFYYDVDIEHTLTQEDLALLEKRMHELADKDYDVIKKKVSWQEARDTFAARGEDYKVAILDENISRDDRPGLYHHEEYVDMCRGPHVPNMRFCHHFKLQKTSGAYWRGDSKNKMLQRIYGTAWGDKKQLNAYLQRLEEAAKRDHRKIGKQLDLYHMQEEAPGMVFWHNDGWTIFRELETFVRMKLKEYQYQEVKGPFMMDRVLWEKTGHWENYAEHMFTTSSENREYCIKPMNCPGHVQIFNQGLKSYRDLPLRMAEFGSCHRNEPSGALHGLMRVRGFTQDDAHVFCTEEQVRDEVNSCIKMVYDMYSTFGFEKIVVKLSTRPEKRIGSDELWTRAEDDLAAALTENGIPFDYQPGEGAFYGPKIEFTLHDCLDRAWQCGTVQLDFSLPGRLSASYIGENNDRQVPVMIHRAILGSMERFIGILTEEYAGFFPTWLAPVQVVVMNITDSQSDYVQQVTKKLQDAGIRAKADLRNEKIGFKIREHTLRRVPYMLVCGDKEVESGKIAVRTRRGKDLGSLDVNVVVDQLLAEIRSRSLHQLEE</sequence>
<name>SYT_YERPS</name>
<feature type="chain" id="PRO_0000101095" description="Threonine--tRNA ligase">
    <location>
        <begin position="1"/>
        <end position="642"/>
    </location>
</feature>
<feature type="domain" description="TGS" evidence="2">
    <location>
        <begin position="1"/>
        <end position="61"/>
    </location>
</feature>
<feature type="region of interest" description="Catalytic" evidence="1">
    <location>
        <begin position="243"/>
        <end position="534"/>
    </location>
</feature>
<feature type="binding site" evidence="1">
    <location>
        <position position="334"/>
    </location>
    <ligand>
        <name>Zn(2+)</name>
        <dbReference type="ChEBI" id="CHEBI:29105"/>
    </ligand>
</feature>
<feature type="binding site" evidence="1">
    <location>
        <position position="385"/>
    </location>
    <ligand>
        <name>Zn(2+)</name>
        <dbReference type="ChEBI" id="CHEBI:29105"/>
    </ligand>
</feature>
<feature type="binding site" evidence="1">
    <location>
        <position position="511"/>
    </location>
    <ligand>
        <name>Zn(2+)</name>
        <dbReference type="ChEBI" id="CHEBI:29105"/>
    </ligand>
</feature>
<comment type="function">
    <text evidence="1">Catalyzes the attachment of threonine to tRNA(Thr) in a two-step reaction: L-threonine is first activated by ATP to form Thr-AMP and then transferred to the acceptor end of tRNA(Thr). Also edits incorrectly charged L-seryl-tRNA(Thr).</text>
</comment>
<comment type="catalytic activity">
    <reaction evidence="1">
        <text>tRNA(Thr) + L-threonine + ATP = L-threonyl-tRNA(Thr) + AMP + diphosphate + H(+)</text>
        <dbReference type="Rhea" id="RHEA:24624"/>
        <dbReference type="Rhea" id="RHEA-COMP:9670"/>
        <dbReference type="Rhea" id="RHEA-COMP:9704"/>
        <dbReference type="ChEBI" id="CHEBI:15378"/>
        <dbReference type="ChEBI" id="CHEBI:30616"/>
        <dbReference type="ChEBI" id="CHEBI:33019"/>
        <dbReference type="ChEBI" id="CHEBI:57926"/>
        <dbReference type="ChEBI" id="CHEBI:78442"/>
        <dbReference type="ChEBI" id="CHEBI:78534"/>
        <dbReference type="ChEBI" id="CHEBI:456215"/>
        <dbReference type="EC" id="6.1.1.3"/>
    </reaction>
</comment>
<comment type="cofactor">
    <cofactor evidence="1">
        <name>Zn(2+)</name>
        <dbReference type="ChEBI" id="CHEBI:29105"/>
    </cofactor>
    <text evidence="1">Binds 1 zinc ion per subunit.</text>
</comment>
<comment type="subunit">
    <text evidence="1">Homodimer.</text>
</comment>
<comment type="subcellular location">
    <subcellularLocation>
        <location evidence="1">Cytoplasm</location>
    </subcellularLocation>
</comment>
<comment type="similarity">
    <text evidence="1">Belongs to the class-II aminoacyl-tRNA synthetase family.</text>
</comment>
<gene>
    <name evidence="1" type="primary">thrS</name>
    <name type="ordered locus">YPTB2342</name>
</gene>
<proteinExistence type="inferred from homology"/>
<reference key="1">
    <citation type="journal article" date="2004" name="Proc. Natl. Acad. Sci. U.S.A.">
        <title>Insights into the evolution of Yersinia pestis through whole-genome comparison with Yersinia pseudotuberculosis.</title>
        <authorList>
            <person name="Chain P.S.G."/>
            <person name="Carniel E."/>
            <person name="Larimer F.W."/>
            <person name="Lamerdin J."/>
            <person name="Stoutland P.O."/>
            <person name="Regala W.M."/>
            <person name="Georgescu A.M."/>
            <person name="Vergez L.M."/>
            <person name="Land M.L."/>
            <person name="Motin V.L."/>
            <person name="Brubaker R.R."/>
            <person name="Fowler J."/>
            <person name="Hinnebusch J."/>
            <person name="Marceau M."/>
            <person name="Medigue C."/>
            <person name="Simonet M."/>
            <person name="Chenal-Francisque V."/>
            <person name="Souza B."/>
            <person name="Dacheux D."/>
            <person name="Elliott J.M."/>
            <person name="Derbise A."/>
            <person name="Hauser L.J."/>
            <person name="Garcia E."/>
        </authorList>
    </citation>
    <scope>NUCLEOTIDE SEQUENCE [LARGE SCALE GENOMIC DNA]</scope>
    <source>
        <strain>IP32953</strain>
    </source>
</reference>
<keyword id="KW-0030">Aminoacyl-tRNA synthetase</keyword>
<keyword id="KW-0067">ATP-binding</keyword>
<keyword id="KW-0963">Cytoplasm</keyword>
<keyword id="KW-0436">Ligase</keyword>
<keyword id="KW-0479">Metal-binding</keyword>
<keyword id="KW-0547">Nucleotide-binding</keyword>
<keyword id="KW-0648">Protein biosynthesis</keyword>
<keyword id="KW-0694">RNA-binding</keyword>
<keyword id="KW-0820">tRNA-binding</keyword>
<keyword id="KW-0862">Zinc</keyword>
<accession>Q669Z0</accession>